<sequence>MRYLCKSILLAVHTILLVGSVCCSTDVHNTDDKYALIHVSAHDEQSLHLIKQLQLNDFKYDLDFWKSPSSISDKADIMVKRGKSERMLRQILSFANVTVSMSVPDVEKLIMRNEGTTSKSHLGFGSLSKWLHDDPILDSEPDLDLTKVGALKKAKYPFGDYASYADMVKYMRTIEFYYPRIAKIVRIGATHEGKPIEGLKIGARSSHKKRAVWVDGNIHAREWASSHTALYFINQLVSEYGKDAQITNYVDTLDFYIVPCLNPDGYEYTRTSPIPTVRLWRKNRSPELCRPSLWGGEKCCRGVDLNRNFRFHWAERGSSYEPCSNIYHGEEVFSEPETRAVRNFLATPEMKDRVDAFVTLHSYAQLWIYPYSHEEQNYPEDIGELRKTARKAINRLSRVYGTNYRMGTGADTLSPAAGGSDDWAKSALNVKYVYLIELRPQMELSNGFILHKKELIPTAVETFEGFREVVDAVLTLNNSTSSIGLSSGSNTSRKTISDLQMRKQQYRMRLLASQAAGSTTRSTTTLKTSTTSVSTTSEATSPSKTSRHFDRFTADLNSSTRARPTPPMAPPIMSPSTEFSTTTTEEEDVTGVIRSSSIASRATTYGFFTATKPSAFLDPECRDMRYSCGFWLKNNKQVCEEQQSFMRAQCAYTCKFCTSFIKRH</sequence>
<comment type="function">
    <text evidence="7">May play a role in processing or organization of cuticle collagen proteins, including rol-6 and col-19.</text>
</comment>
<comment type="cofactor">
    <cofactor evidence="1">
        <name>Zn(2+)</name>
        <dbReference type="ChEBI" id="CHEBI:29105"/>
    </cofactor>
</comment>
<comment type="subcellular location">
    <subcellularLocation>
        <location evidence="7">Cytoplasmic vesicle</location>
    </subcellularLocation>
    <subcellularLocation>
        <location evidence="9">Secreted</location>
    </subcellularLocation>
</comment>
<comment type="tissue specificity">
    <text evidence="7">Localizes in stripes along the cuticle.</text>
</comment>
<comment type="developmental stage">
    <text evidence="7">Expressed from the 3-fold embryonic stage to young adult and at the larval stage in hypodermal and intestinal cells.</text>
</comment>
<comment type="domain">
    <text evidence="7">The ShKT and Thr-rich domains are required for body morphogenesis.</text>
</comment>
<comment type="disruption phenotype">
    <text evidence="7">RNAi-mediated knockdown results in a slightly shorter and stouter body.</text>
</comment>
<comment type="similarity">
    <text evidence="8">Belongs to the peptidase M14 family.</text>
</comment>
<protein>
    <recommendedName>
        <fullName evidence="8">Putative carboxypeptidase suro-1</fullName>
        <ecNumber evidence="2">3.4.17.-</ecNumber>
    </recommendedName>
    <alternativeName>
        <fullName evidence="11">Suppressor of roller 1</fullName>
    </alternativeName>
</protein>
<organism evidence="10">
    <name type="scientific">Caenorhabditis elegans</name>
    <dbReference type="NCBI Taxonomy" id="6239"/>
    <lineage>
        <taxon>Eukaryota</taxon>
        <taxon>Metazoa</taxon>
        <taxon>Ecdysozoa</taxon>
        <taxon>Nematoda</taxon>
        <taxon>Chromadorea</taxon>
        <taxon>Rhabditida</taxon>
        <taxon>Rhabditina</taxon>
        <taxon>Rhabditomorpha</taxon>
        <taxon>Rhabditoidea</taxon>
        <taxon>Rhabditidae</taxon>
        <taxon>Peloderinae</taxon>
        <taxon>Caenorhabditis</taxon>
    </lineage>
</organism>
<evidence type="ECO:0000250" key="1">
    <source>
        <dbReference type="UniProtKB" id="P15085"/>
    </source>
</evidence>
<evidence type="ECO:0000250" key="2">
    <source>
        <dbReference type="UniProtKB" id="Q9UI42"/>
    </source>
</evidence>
<evidence type="ECO:0000255" key="3"/>
<evidence type="ECO:0000255" key="4">
    <source>
        <dbReference type="PROSITE-ProRule" id="PRU01005"/>
    </source>
</evidence>
<evidence type="ECO:0000255" key="5">
    <source>
        <dbReference type="PROSITE-ProRule" id="PRU01379"/>
    </source>
</evidence>
<evidence type="ECO:0000256" key="6">
    <source>
        <dbReference type="SAM" id="MobiDB-lite"/>
    </source>
</evidence>
<evidence type="ECO:0000269" key="7">
    <source>
    </source>
</evidence>
<evidence type="ECO:0000305" key="8"/>
<evidence type="ECO:0000305" key="9">
    <source>
    </source>
</evidence>
<evidence type="ECO:0000312" key="10">
    <source>
        <dbReference type="Proteomes" id="UP000001940"/>
    </source>
</evidence>
<evidence type="ECO:0000312" key="11">
    <source>
        <dbReference type="WormBase" id="R11A5.7"/>
    </source>
</evidence>
<gene>
    <name evidence="11" type="primary">suro-1</name>
    <name evidence="11" type="ORF">R11A5.7</name>
</gene>
<feature type="signal peptide" evidence="3">
    <location>
        <begin position="1"/>
        <end position="23"/>
    </location>
</feature>
<feature type="propeptide" id="PRO_0000436543" description="Activation peptide" evidence="8">
    <location>
        <begin position="24"/>
        <end position="110"/>
    </location>
</feature>
<feature type="chain" id="PRO_5004336700" description="Putative carboxypeptidase suro-1" evidence="3">
    <location>
        <begin position="111"/>
        <end position="664"/>
    </location>
</feature>
<feature type="domain" description="Peptidase M14" evidence="5">
    <location>
        <begin position="160"/>
        <end position="473"/>
    </location>
</feature>
<feature type="domain" description="ShKT" evidence="4">
    <location>
        <begin position="621"/>
        <end position="657"/>
    </location>
</feature>
<feature type="region of interest" description="Disordered" evidence="6">
    <location>
        <begin position="512"/>
        <end position="590"/>
    </location>
</feature>
<feature type="compositionally biased region" description="Low complexity" evidence="6">
    <location>
        <begin position="512"/>
        <end position="543"/>
    </location>
</feature>
<feature type="compositionally biased region" description="Pro residues" evidence="6">
    <location>
        <begin position="564"/>
        <end position="573"/>
    </location>
</feature>
<feature type="compositionally biased region" description="Low complexity" evidence="6">
    <location>
        <begin position="574"/>
        <end position="583"/>
    </location>
</feature>
<feature type="active site" description="Proton donor/acceptor" evidence="5">
    <location>
        <position position="437"/>
    </location>
</feature>
<feature type="binding site" evidence="1">
    <location>
        <begin position="219"/>
        <end position="222"/>
    </location>
    <ligand>
        <name>substrate</name>
    </ligand>
</feature>
<feature type="binding site" evidence="5">
    <location>
        <position position="219"/>
    </location>
    <ligand>
        <name>Zn(2+)</name>
        <dbReference type="ChEBI" id="CHEBI:29105"/>
        <note>catalytic</note>
    </ligand>
</feature>
<feature type="binding site" evidence="5">
    <location>
        <position position="222"/>
    </location>
    <ligand>
        <name>Zn(2+)</name>
        <dbReference type="ChEBI" id="CHEBI:29105"/>
        <note>catalytic</note>
    </ligand>
</feature>
<feature type="binding site" evidence="1">
    <location>
        <position position="281"/>
    </location>
    <ligand>
        <name>substrate</name>
    </ligand>
</feature>
<feature type="binding site" evidence="1">
    <location>
        <begin position="306"/>
        <end position="307"/>
    </location>
    <ligand>
        <name>substrate</name>
    </ligand>
</feature>
<feature type="binding site" evidence="5">
    <location>
        <position position="361"/>
    </location>
    <ligand>
        <name>Zn(2+)</name>
        <dbReference type="ChEBI" id="CHEBI:29105"/>
        <note>catalytic</note>
    </ligand>
</feature>
<feature type="binding site" evidence="1">
    <location>
        <begin position="362"/>
        <end position="363"/>
    </location>
    <ligand>
        <name>substrate</name>
    </ligand>
</feature>
<feature type="disulfide bond" evidence="4">
    <location>
        <begin position="621"/>
        <end position="657"/>
    </location>
</feature>
<feature type="disulfide bond" evidence="4">
    <location>
        <begin position="628"/>
        <end position="650"/>
    </location>
</feature>
<feature type="disulfide bond" evidence="4">
    <location>
        <begin position="639"/>
        <end position="654"/>
    </location>
</feature>
<feature type="mutagenesis site" description="In jg43; Abnormal localization of the collagen proteins rol-6 and col-19." evidence="7">
    <original>I</original>
    <variation>F</variation>
    <location>
        <position position="110"/>
    </location>
</feature>
<feature type="mutagenesis site" description="In jg34; Shorter and stouter body. Abnormal localization of the collagen proteins rol-6 and col-19. In mutants lacking rol-6, suppresses body rolling and restores normal orientation of alea." evidence="7">
    <original>G</original>
    <variation>E</variation>
    <location>
        <position position="407"/>
    </location>
</feature>
<proteinExistence type="evidence at protein level"/>
<accession>Q9XU75</accession>
<reference evidence="10" key="1">
    <citation type="journal article" date="1998" name="Science">
        <title>Genome sequence of the nematode C. elegans: a platform for investigating biology.</title>
        <authorList>
            <consortium name="The C. elegans sequencing consortium"/>
        </authorList>
    </citation>
    <scope>NUCLEOTIDE SEQUENCE [LARGE SCALE GENOMIC DNA]</scope>
    <source>
        <strain evidence="10">Bristol N2</strain>
    </source>
</reference>
<reference evidence="8" key="2">
    <citation type="journal article" date="2011" name="FEBS Lett.">
        <title>A novel zinc-carboxypeptidase SURO-1 regulates cuticle formation and body morphogenesis in Caenorhabditis elegans.</title>
        <authorList>
            <person name="Kim T.H."/>
            <person name="Kim Y.J."/>
            <person name="Cho J.W."/>
            <person name="Shim J."/>
        </authorList>
    </citation>
    <scope>FUNCTION</scope>
    <scope>SUBCELLULAR LOCATION</scope>
    <scope>TISSUE SPECIFICITY</scope>
    <scope>DEVELOPMENTAL STAGE</scope>
    <scope>DOMAIN</scope>
    <scope>DISRUPTION PHENOTYPE</scope>
    <scope>MUTAGENESIS OF ILE-110 AND GLY-407</scope>
</reference>
<name>SURO1_CAEEL</name>
<dbReference type="EC" id="3.4.17.-" evidence="2"/>
<dbReference type="EMBL" id="BX284601">
    <property type="protein sequence ID" value="CAB05602.2"/>
    <property type="molecule type" value="Genomic_DNA"/>
</dbReference>
<dbReference type="PIR" id="T24170">
    <property type="entry name" value="T24170"/>
</dbReference>
<dbReference type="RefSeq" id="NP_492177.2">
    <property type="nucleotide sequence ID" value="NM_059776.6"/>
</dbReference>
<dbReference type="SMR" id="Q9XU75"/>
<dbReference type="FunCoup" id="Q9XU75">
    <property type="interactions" value="19"/>
</dbReference>
<dbReference type="STRING" id="6239.R11A5.7.1"/>
<dbReference type="MEROPS" id="M14.035"/>
<dbReference type="PaxDb" id="6239-R11A5.7"/>
<dbReference type="PeptideAtlas" id="Q9XU75"/>
<dbReference type="EnsemblMetazoa" id="R11A5.7.1">
    <property type="protein sequence ID" value="R11A5.7.1"/>
    <property type="gene ID" value="WBGene00011235"/>
</dbReference>
<dbReference type="GeneID" id="172557"/>
<dbReference type="KEGG" id="cel:CELE_R11A5.7"/>
<dbReference type="UCSC" id="R11A5.7.1">
    <property type="organism name" value="c. elegans"/>
</dbReference>
<dbReference type="AGR" id="WB:WBGene00011235"/>
<dbReference type="CTD" id="172557"/>
<dbReference type="WormBase" id="R11A5.7">
    <property type="protein sequence ID" value="CE32478"/>
    <property type="gene ID" value="WBGene00011235"/>
    <property type="gene designation" value="suro-1"/>
</dbReference>
<dbReference type="eggNOG" id="KOG2650">
    <property type="taxonomic scope" value="Eukaryota"/>
</dbReference>
<dbReference type="HOGENOM" id="CLU_019326_2_3_1"/>
<dbReference type="InParanoid" id="Q9XU75"/>
<dbReference type="OMA" id="RYLCKSI"/>
<dbReference type="OrthoDB" id="3626597at2759"/>
<dbReference type="PhylomeDB" id="Q9XU75"/>
<dbReference type="Reactome" id="R-CEL-2022377">
    <property type="pathway name" value="Metabolism of Angiotensinogen to Angiotensins"/>
</dbReference>
<dbReference type="PRO" id="PR:Q9XU75"/>
<dbReference type="Proteomes" id="UP000001940">
    <property type="component" value="Chromosome I"/>
</dbReference>
<dbReference type="Bgee" id="WBGene00011235">
    <property type="expression patterns" value="Expressed in embryo and 3 other cell types or tissues"/>
</dbReference>
<dbReference type="GO" id="GO:0060102">
    <property type="term" value="C:cuticular extracellular matrix"/>
    <property type="evidence" value="ECO:0000314"/>
    <property type="project" value="WormBase"/>
</dbReference>
<dbReference type="GO" id="GO:0005737">
    <property type="term" value="C:cytoplasm"/>
    <property type="evidence" value="ECO:0000314"/>
    <property type="project" value="WormBase"/>
</dbReference>
<dbReference type="GO" id="GO:0031410">
    <property type="term" value="C:cytoplasmic vesicle"/>
    <property type="evidence" value="ECO:0007669"/>
    <property type="project" value="UniProtKB-KW"/>
</dbReference>
<dbReference type="GO" id="GO:0005615">
    <property type="term" value="C:extracellular space"/>
    <property type="evidence" value="ECO:0000318"/>
    <property type="project" value="GO_Central"/>
</dbReference>
<dbReference type="GO" id="GO:0004181">
    <property type="term" value="F:metallocarboxypeptidase activity"/>
    <property type="evidence" value="ECO:0000318"/>
    <property type="project" value="GO_Central"/>
</dbReference>
<dbReference type="GO" id="GO:0008270">
    <property type="term" value="F:zinc ion binding"/>
    <property type="evidence" value="ECO:0007669"/>
    <property type="project" value="InterPro"/>
</dbReference>
<dbReference type="GO" id="GO:0006508">
    <property type="term" value="P:proteolysis"/>
    <property type="evidence" value="ECO:0000318"/>
    <property type="project" value="GO_Central"/>
</dbReference>
<dbReference type="CDD" id="cd03860">
    <property type="entry name" value="M14_CP_A-B_like"/>
    <property type="match status" value="1"/>
</dbReference>
<dbReference type="FunFam" id="3.40.630.10:FF:000070">
    <property type="entry name" value="Putative carboxypeptidase suro-1"/>
    <property type="match status" value="1"/>
</dbReference>
<dbReference type="Gene3D" id="3.30.70.340">
    <property type="entry name" value="Metallocarboxypeptidase-like"/>
    <property type="match status" value="1"/>
</dbReference>
<dbReference type="Gene3D" id="3.40.630.10">
    <property type="entry name" value="Zn peptidases"/>
    <property type="match status" value="1"/>
</dbReference>
<dbReference type="InterPro" id="IPR036990">
    <property type="entry name" value="M14A-like_propep"/>
</dbReference>
<dbReference type="InterPro" id="IPR003146">
    <property type="entry name" value="M14A_act_pep"/>
</dbReference>
<dbReference type="InterPro" id="IPR000834">
    <property type="entry name" value="Peptidase_M14"/>
</dbReference>
<dbReference type="InterPro" id="IPR003582">
    <property type="entry name" value="ShKT_dom"/>
</dbReference>
<dbReference type="PANTHER" id="PTHR11705:SF51">
    <property type="entry name" value="CARBOXYPEPTIDASE SURO-1-RELATED"/>
    <property type="match status" value="1"/>
</dbReference>
<dbReference type="PANTHER" id="PTHR11705">
    <property type="entry name" value="PROTEASE FAMILY M14 CARBOXYPEPTIDASE A,B"/>
    <property type="match status" value="1"/>
</dbReference>
<dbReference type="Pfam" id="PF00246">
    <property type="entry name" value="Peptidase_M14"/>
    <property type="match status" value="1"/>
</dbReference>
<dbReference type="Pfam" id="PF02244">
    <property type="entry name" value="Propep_M14"/>
    <property type="match status" value="1"/>
</dbReference>
<dbReference type="Pfam" id="PF01549">
    <property type="entry name" value="ShK"/>
    <property type="match status" value="1"/>
</dbReference>
<dbReference type="PRINTS" id="PR00765">
    <property type="entry name" value="CRBOXYPTASEA"/>
</dbReference>
<dbReference type="SMART" id="SM00254">
    <property type="entry name" value="ShKT"/>
    <property type="match status" value="1"/>
</dbReference>
<dbReference type="SMART" id="SM00631">
    <property type="entry name" value="Zn_pept"/>
    <property type="match status" value="1"/>
</dbReference>
<dbReference type="SUPFAM" id="SSF54897">
    <property type="entry name" value="Protease propeptides/inhibitors"/>
    <property type="match status" value="1"/>
</dbReference>
<dbReference type="SUPFAM" id="SSF53187">
    <property type="entry name" value="Zn-dependent exopeptidases"/>
    <property type="match status" value="1"/>
</dbReference>
<dbReference type="PROSITE" id="PS00133">
    <property type="entry name" value="CARBOXYPEPT_ZN_2"/>
    <property type="match status" value="1"/>
</dbReference>
<dbReference type="PROSITE" id="PS52035">
    <property type="entry name" value="PEPTIDASE_M14"/>
    <property type="match status" value="1"/>
</dbReference>
<dbReference type="PROSITE" id="PS51670">
    <property type="entry name" value="SHKT"/>
    <property type="match status" value="1"/>
</dbReference>
<keyword id="KW-0121">Carboxypeptidase</keyword>
<keyword id="KW-0968">Cytoplasmic vesicle</keyword>
<keyword id="KW-1015">Disulfide bond</keyword>
<keyword id="KW-0378">Hydrolase</keyword>
<keyword id="KW-0479">Metal-binding</keyword>
<keyword id="KW-0482">Metalloprotease</keyword>
<keyword id="KW-0645">Protease</keyword>
<keyword id="KW-1185">Reference proteome</keyword>
<keyword id="KW-0964">Secreted</keyword>
<keyword id="KW-0732">Signal</keyword>
<keyword id="KW-0862">Zinc</keyword>
<keyword id="KW-0865">Zymogen</keyword>